<accession>Q0KEP9</accession>
<gene>
    <name evidence="1" type="primary">rplY</name>
    <name evidence="1" type="synonym">ctc</name>
    <name type="ordered locus">H16_A0371</name>
</gene>
<proteinExistence type="inferred from homology"/>
<protein>
    <recommendedName>
        <fullName evidence="1">Large ribosomal subunit protein bL25</fullName>
    </recommendedName>
    <alternativeName>
        <fullName evidence="3">50S ribosomal protein L25</fullName>
    </alternativeName>
    <alternativeName>
        <fullName evidence="1">General stress protein CTC</fullName>
    </alternativeName>
</protein>
<sequence>MKVVAFERSVQGTGASRRLRNSGKTPGIIYGGAAEPKMIELDHNALWHALKKEAFHSSILELEVAGKSEQALLRAFQMHPFKPLVLHVDFQRVSANDKIHVKVPLHFMNQETAPGVKLGHGIVNHILNDLEVSCLPADLPEFIEVDLAAVELNQTVHLSDIKLPKGVTVITHGDDNPAVASISQPAGAVSEAAEGGEAAGETPAA</sequence>
<reference key="1">
    <citation type="journal article" date="2006" name="Nat. Biotechnol.">
        <title>Genome sequence of the bioplastic-producing 'Knallgas' bacterium Ralstonia eutropha H16.</title>
        <authorList>
            <person name="Pohlmann A."/>
            <person name="Fricke W.F."/>
            <person name="Reinecke F."/>
            <person name="Kusian B."/>
            <person name="Liesegang H."/>
            <person name="Cramm R."/>
            <person name="Eitinger T."/>
            <person name="Ewering C."/>
            <person name="Poetter M."/>
            <person name="Schwartz E."/>
            <person name="Strittmatter A."/>
            <person name="Voss I."/>
            <person name="Gottschalk G."/>
            <person name="Steinbuechel A."/>
            <person name="Friedrich B."/>
            <person name="Bowien B."/>
        </authorList>
    </citation>
    <scope>NUCLEOTIDE SEQUENCE [LARGE SCALE GENOMIC DNA]</scope>
    <source>
        <strain>ATCC 17699 / DSM 428 / KCTC 22496 / NCIMB 10442 / H16 / Stanier 337</strain>
    </source>
</reference>
<comment type="function">
    <text evidence="1">This is one of the proteins that binds to the 5S RNA in the ribosome where it forms part of the central protuberance.</text>
</comment>
<comment type="subunit">
    <text evidence="1">Part of the 50S ribosomal subunit; part of the 5S rRNA/L5/L18/L25 subcomplex. Contacts the 5S rRNA. Binds to the 5S rRNA independently of L5 and L18.</text>
</comment>
<comment type="similarity">
    <text evidence="1">Belongs to the bacterial ribosomal protein bL25 family. CTC subfamily.</text>
</comment>
<name>RL25_CUPNH</name>
<dbReference type="EMBL" id="AM260479">
    <property type="protein sequence ID" value="CAJ91522.1"/>
    <property type="molecule type" value="Genomic_DNA"/>
</dbReference>
<dbReference type="RefSeq" id="WP_010814373.1">
    <property type="nucleotide sequence ID" value="NZ_CP039287.1"/>
</dbReference>
<dbReference type="SMR" id="Q0KEP9"/>
<dbReference type="STRING" id="381666.H16_A0371"/>
<dbReference type="KEGG" id="reh:H16_A0371"/>
<dbReference type="eggNOG" id="COG1825">
    <property type="taxonomic scope" value="Bacteria"/>
</dbReference>
<dbReference type="HOGENOM" id="CLU_075939_0_1_4"/>
<dbReference type="OrthoDB" id="9806411at2"/>
<dbReference type="Proteomes" id="UP000008210">
    <property type="component" value="Chromosome 1"/>
</dbReference>
<dbReference type="GO" id="GO:0022625">
    <property type="term" value="C:cytosolic large ribosomal subunit"/>
    <property type="evidence" value="ECO:0007669"/>
    <property type="project" value="TreeGrafter"/>
</dbReference>
<dbReference type="GO" id="GO:0008097">
    <property type="term" value="F:5S rRNA binding"/>
    <property type="evidence" value="ECO:0007669"/>
    <property type="project" value="InterPro"/>
</dbReference>
<dbReference type="GO" id="GO:0003735">
    <property type="term" value="F:structural constituent of ribosome"/>
    <property type="evidence" value="ECO:0007669"/>
    <property type="project" value="InterPro"/>
</dbReference>
<dbReference type="GO" id="GO:0006412">
    <property type="term" value="P:translation"/>
    <property type="evidence" value="ECO:0007669"/>
    <property type="project" value="UniProtKB-UniRule"/>
</dbReference>
<dbReference type="CDD" id="cd00495">
    <property type="entry name" value="Ribosomal_L25_TL5_CTC"/>
    <property type="match status" value="1"/>
</dbReference>
<dbReference type="Gene3D" id="2.170.120.20">
    <property type="entry name" value="Ribosomal protein L25, beta domain"/>
    <property type="match status" value="1"/>
</dbReference>
<dbReference type="Gene3D" id="2.40.240.10">
    <property type="entry name" value="Ribosomal Protein L25, Chain P"/>
    <property type="match status" value="1"/>
</dbReference>
<dbReference type="HAMAP" id="MF_01336">
    <property type="entry name" value="Ribosomal_bL25"/>
    <property type="match status" value="1"/>
</dbReference>
<dbReference type="HAMAP" id="MF_01334">
    <property type="entry name" value="Ribosomal_bL25_CTC"/>
    <property type="match status" value="1"/>
</dbReference>
<dbReference type="InterPro" id="IPR020056">
    <property type="entry name" value="Rbsml_bL25/Gln-tRNA_synth_N"/>
</dbReference>
<dbReference type="InterPro" id="IPR011035">
    <property type="entry name" value="Ribosomal_bL25/Gln-tRNA_synth"/>
</dbReference>
<dbReference type="InterPro" id="IPR020057">
    <property type="entry name" value="Ribosomal_bL25_b-dom"/>
</dbReference>
<dbReference type="InterPro" id="IPR037121">
    <property type="entry name" value="Ribosomal_bL25_C"/>
</dbReference>
<dbReference type="InterPro" id="IPR001021">
    <property type="entry name" value="Ribosomal_bL25_long"/>
</dbReference>
<dbReference type="InterPro" id="IPR020055">
    <property type="entry name" value="Ribosomal_bL25_short"/>
</dbReference>
<dbReference type="InterPro" id="IPR029751">
    <property type="entry name" value="Ribosomal_L25_dom"/>
</dbReference>
<dbReference type="InterPro" id="IPR020930">
    <property type="entry name" value="Ribosomal_uL5_bac-type"/>
</dbReference>
<dbReference type="NCBIfam" id="TIGR00731">
    <property type="entry name" value="bL25_bact_ctc"/>
    <property type="match status" value="1"/>
</dbReference>
<dbReference type="NCBIfam" id="NF004128">
    <property type="entry name" value="PRK05618.1-2"/>
    <property type="match status" value="1"/>
</dbReference>
<dbReference type="NCBIfam" id="NF004130">
    <property type="entry name" value="PRK05618.1-5"/>
    <property type="match status" value="1"/>
</dbReference>
<dbReference type="NCBIfam" id="NF004612">
    <property type="entry name" value="PRK05943.1"/>
    <property type="match status" value="1"/>
</dbReference>
<dbReference type="PANTHER" id="PTHR33284">
    <property type="entry name" value="RIBOSOMAL PROTEIN L25/GLN-TRNA SYNTHETASE, ANTI-CODON-BINDING DOMAIN-CONTAINING PROTEIN"/>
    <property type="match status" value="1"/>
</dbReference>
<dbReference type="PANTHER" id="PTHR33284:SF1">
    <property type="entry name" value="RIBOSOMAL PROTEIN L25_GLN-TRNA SYNTHETASE, ANTI-CODON-BINDING DOMAIN-CONTAINING PROTEIN"/>
    <property type="match status" value="1"/>
</dbReference>
<dbReference type="Pfam" id="PF01386">
    <property type="entry name" value="Ribosomal_L25p"/>
    <property type="match status" value="1"/>
</dbReference>
<dbReference type="Pfam" id="PF14693">
    <property type="entry name" value="Ribosomal_TL5_C"/>
    <property type="match status" value="1"/>
</dbReference>
<dbReference type="SUPFAM" id="SSF50715">
    <property type="entry name" value="Ribosomal protein L25-like"/>
    <property type="match status" value="1"/>
</dbReference>
<evidence type="ECO:0000255" key="1">
    <source>
        <dbReference type="HAMAP-Rule" id="MF_01334"/>
    </source>
</evidence>
<evidence type="ECO:0000256" key="2">
    <source>
        <dbReference type="SAM" id="MobiDB-lite"/>
    </source>
</evidence>
<evidence type="ECO:0000305" key="3"/>
<feature type="chain" id="PRO_1000052923" description="Large ribosomal subunit protein bL25">
    <location>
        <begin position="1"/>
        <end position="205"/>
    </location>
</feature>
<feature type="region of interest" description="Disordered" evidence="2">
    <location>
        <begin position="184"/>
        <end position="205"/>
    </location>
</feature>
<feature type="compositionally biased region" description="Low complexity" evidence="2">
    <location>
        <begin position="186"/>
        <end position="205"/>
    </location>
</feature>
<keyword id="KW-1185">Reference proteome</keyword>
<keyword id="KW-0687">Ribonucleoprotein</keyword>
<keyword id="KW-0689">Ribosomal protein</keyword>
<keyword id="KW-0694">RNA-binding</keyword>
<keyword id="KW-0699">rRNA-binding</keyword>
<organism>
    <name type="scientific">Cupriavidus necator (strain ATCC 17699 / DSM 428 / KCTC 22496 / NCIMB 10442 / H16 / Stanier 337)</name>
    <name type="common">Ralstonia eutropha</name>
    <dbReference type="NCBI Taxonomy" id="381666"/>
    <lineage>
        <taxon>Bacteria</taxon>
        <taxon>Pseudomonadati</taxon>
        <taxon>Pseudomonadota</taxon>
        <taxon>Betaproteobacteria</taxon>
        <taxon>Burkholderiales</taxon>
        <taxon>Burkholderiaceae</taxon>
        <taxon>Cupriavidus</taxon>
    </lineage>
</organism>